<keyword id="KW-0027">Amidation</keyword>
<keyword id="KW-0903">Direct protein sequencing</keyword>
<keyword id="KW-1015">Disulfide bond</keyword>
<keyword id="KW-0872">Ion channel impairing toxin</keyword>
<keyword id="KW-0528">Neurotoxin</keyword>
<keyword id="KW-0964">Secreted</keyword>
<keyword id="KW-0800">Toxin</keyword>
<keyword id="KW-0738">Voltage-gated sodium channel impairing toxin</keyword>
<comment type="function">
    <text evidence="3">Beta toxins bind voltage-independently at site-4 of sodium channels and shift the voltage of activation toward more negative potentials thereby affecting sodium channel activation and promoting spontaneous and repetitive firing (PubMed:38535792). A mixture of Cbo2 and Cbo3 is weakly active on the human voltage-gated sodium channels Nav1.4/SCN4A and Nav1.6/SCN8A when tested at 200 nM (PubMed:38535792). In vivo, is toxic to mice when intraperitoneally injected (PubMed:38535792).</text>
</comment>
<comment type="subcellular location">
    <subcellularLocation>
        <location evidence="3">Secreted</location>
    </subcellularLocation>
</comment>
<comment type="tissue specificity">
    <text evidence="6">Expressed by the venom gland.</text>
</comment>
<comment type="domain">
    <text evidence="5">Has the structural arrangement of an alpha-helix connected to antiparallel beta-sheets by disulfide bonds (CS-alpha/beta).</text>
</comment>
<comment type="mass spectrometry"/>
<comment type="miscellaneous">
    <text evidence="3">Negative results: a mixture of Cbo2 and Cbo3 does not modify the currents of the human voltage-gated sodium channels Nav1.1/SCN1A, Nav1.2/SCN2A, Nav1.3/SCN3A, Nav1.5/SCN5A and Nav1.7/SCN9A.</text>
</comment>
<comment type="similarity">
    <text evidence="5">Belongs to the long (4 C-C) scorpion toxin superfamily. Sodium channel inhibitor family. Beta subfamily.</text>
</comment>
<accession>C0HMA5</accession>
<proteinExistence type="evidence at protein level"/>
<reference evidence="5" key="1">
    <citation type="journal article" date="2024" name="Toxins">
        <title>Characterization of Sodium Channel Peptides Obtained from the Venom of the Scorpion Centruroides bonito.</title>
        <authorList>
            <person name="Restano-Cassulini R."/>
            <person name="Olamendi-Portugal T."/>
            <person name="Riano-Umbarila L."/>
            <person name="Zamudio F.Z."/>
            <person name="Delgado-Prudencio G."/>
            <person name="Becerril B."/>
            <person name="Possani L.D."/>
        </authorList>
    </citation>
    <scope>PROTEIN SEQUENCE</scope>
    <scope>FUNCTION</scope>
    <scope>SUBCELLULAR LOCATION</scope>
    <scope>TISSUE SPECIFICITY</scope>
    <scope>MASS SPECTROMETRY</scope>
    <source>
        <tissue evidence="4">Venom</tissue>
    </source>
</reference>
<feature type="chain" id="PRO_0000461091" description="Beta-toxin Cbo3">
    <location>
        <begin position="1"/>
        <end position="66"/>
    </location>
</feature>
<feature type="domain" description="LCN-type CS-alpha/beta" evidence="2">
    <location>
        <begin position="1"/>
        <end position="66"/>
    </location>
</feature>
<feature type="modified residue" description="Asparagine amide" evidence="1">
    <location>
        <position position="66"/>
    </location>
</feature>
<feature type="disulfide bond" evidence="2">
    <location>
        <begin position="12"/>
        <end position="65"/>
    </location>
</feature>
<feature type="disulfide bond" evidence="2">
    <location>
        <begin position="16"/>
        <end position="41"/>
    </location>
</feature>
<feature type="disulfide bond" evidence="2">
    <location>
        <begin position="25"/>
        <end position="46"/>
    </location>
</feature>
<feature type="disulfide bond" evidence="2">
    <location>
        <begin position="29"/>
        <end position="48"/>
    </location>
</feature>
<sequence>KEGYIVNYHDGCKYECYKLGDNDYCLRECKARYGKGAGGYCYAFGCWCTHLYEQAVVWPLPKKTCN</sequence>
<protein>
    <recommendedName>
        <fullName evidence="5">Beta-toxin Cbo3</fullName>
        <shortName evidence="4">Cbo3</shortName>
    </recommendedName>
</protein>
<evidence type="ECO:0000250" key="1">
    <source>
        <dbReference type="UniProtKB" id="Q7Z1K8"/>
    </source>
</evidence>
<evidence type="ECO:0000255" key="2">
    <source>
        <dbReference type="PROSITE-ProRule" id="PRU01210"/>
    </source>
</evidence>
<evidence type="ECO:0000269" key="3">
    <source>
    </source>
</evidence>
<evidence type="ECO:0000303" key="4">
    <source>
    </source>
</evidence>
<evidence type="ECO:0000305" key="5"/>
<evidence type="ECO:0000305" key="6">
    <source>
    </source>
</evidence>
<organism>
    <name type="scientific">Centruroides bonito</name>
    <name type="common">Scorpion</name>
    <dbReference type="NCBI Taxonomy" id="3035065"/>
    <lineage>
        <taxon>Eukaryota</taxon>
        <taxon>Metazoa</taxon>
        <taxon>Ecdysozoa</taxon>
        <taxon>Arthropoda</taxon>
        <taxon>Chelicerata</taxon>
        <taxon>Arachnida</taxon>
        <taxon>Scorpiones</taxon>
        <taxon>Buthida</taxon>
        <taxon>Buthoidea</taxon>
        <taxon>Buthidae</taxon>
        <taxon>Centruroides</taxon>
    </lineage>
</organism>
<name>SCX3_CENBO</name>
<dbReference type="SMR" id="C0HMA5"/>
<dbReference type="GO" id="GO:0005576">
    <property type="term" value="C:extracellular region"/>
    <property type="evidence" value="ECO:0007669"/>
    <property type="project" value="UniProtKB-SubCell"/>
</dbReference>
<dbReference type="GO" id="GO:0019871">
    <property type="term" value="F:sodium channel inhibitor activity"/>
    <property type="evidence" value="ECO:0007669"/>
    <property type="project" value="InterPro"/>
</dbReference>
<dbReference type="GO" id="GO:0090729">
    <property type="term" value="F:toxin activity"/>
    <property type="evidence" value="ECO:0007669"/>
    <property type="project" value="UniProtKB-KW"/>
</dbReference>
<dbReference type="GO" id="GO:0006952">
    <property type="term" value="P:defense response"/>
    <property type="evidence" value="ECO:0007669"/>
    <property type="project" value="InterPro"/>
</dbReference>
<dbReference type="CDD" id="cd23106">
    <property type="entry name" value="neurotoxins_LC_scorpion"/>
    <property type="match status" value="1"/>
</dbReference>
<dbReference type="FunFam" id="3.30.30.10:FF:000002">
    <property type="entry name" value="Alpha-like toxin BmK-M1"/>
    <property type="match status" value="1"/>
</dbReference>
<dbReference type="Gene3D" id="3.30.30.10">
    <property type="entry name" value="Knottin, scorpion toxin-like"/>
    <property type="match status" value="1"/>
</dbReference>
<dbReference type="InterPro" id="IPR044062">
    <property type="entry name" value="LCN-type_CS_alpha_beta_dom"/>
</dbReference>
<dbReference type="InterPro" id="IPR003614">
    <property type="entry name" value="Scorpion_toxin-like"/>
</dbReference>
<dbReference type="InterPro" id="IPR036574">
    <property type="entry name" value="Scorpion_toxin-like_sf"/>
</dbReference>
<dbReference type="InterPro" id="IPR018218">
    <property type="entry name" value="Scorpion_toxinL"/>
</dbReference>
<dbReference type="PRINTS" id="PR00285">
    <property type="entry name" value="SCORPNTOXIN"/>
</dbReference>
<dbReference type="SMART" id="SM00505">
    <property type="entry name" value="Knot1"/>
    <property type="match status" value="1"/>
</dbReference>
<dbReference type="SUPFAM" id="SSF57095">
    <property type="entry name" value="Scorpion toxin-like"/>
    <property type="match status" value="1"/>
</dbReference>
<dbReference type="PROSITE" id="PS51863">
    <property type="entry name" value="LCN_CSAB"/>
    <property type="match status" value="1"/>
</dbReference>